<organism>
    <name type="scientific">Conus tessulatus</name>
    <name type="common">Tessellate cone</name>
    <dbReference type="NCBI Taxonomy" id="101317"/>
    <lineage>
        <taxon>Eukaryota</taxon>
        <taxon>Metazoa</taxon>
        <taxon>Spiralia</taxon>
        <taxon>Lophotrochozoa</taxon>
        <taxon>Mollusca</taxon>
        <taxon>Gastropoda</taxon>
        <taxon>Caenogastropoda</taxon>
        <taxon>Neogastropoda</taxon>
        <taxon>Conoidea</taxon>
        <taxon>Conidae</taxon>
        <taxon>Conus</taxon>
        <taxon>Tesselliconus</taxon>
    </lineage>
</organism>
<sequence>MLCLPVFIILLLLASPAAPNPLERRIQSDLIRTALEDADMKTPKGVLSGIMSNLGTVGNMVGGFCCTVYSGCCSEK</sequence>
<proteinExistence type="inferred from homology"/>
<feature type="signal peptide" evidence="2">
    <location>
        <begin position="1"/>
        <end position="19"/>
    </location>
</feature>
<feature type="propeptide" id="PRO_0000404952" evidence="1">
    <location>
        <begin position="20"/>
        <end position="44"/>
    </location>
</feature>
<feature type="peptide" id="PRO_0000404953" description="Conotoxin TsMLCL-03">
    <location>
        <begin position="45"/>
        <end position="75"/>
    </location>
</feature>
<protein>
    <recommendedName>
        <fullName evidence="5">Conotoxin TsMLCL-03</fullName>
    </recommendedName>
</protein>
<comment type="subcellular location">
    <subcellularLocation>
        <location evidence="4">Secreted</location>
    </subcellularLocation>
</comment>
<comment type="tissue specificity">
    <text evidence="4">Expressed by the venom duct.</text>
</comment>
<comment type="domain">
    <text evidence="3">The cysteine framework is V (CC-CC).</text>
</comment>
<comment type="PTM">
    <text evidence="3">Contains 2 disulfide bonds that can be either 'C1-C3, C2-C4' or 'C1-C4, C2-C3', since these disulfide connectivities have been observed for conotoxins with cysteine framework V (for examples, see AC P0DQQ7 and AC P81755).</text>
</comment>
<comment type="similarity">
    <text evidence="3">Belongs to the conotoxin T superfamily.</text>
</comment>
<reference key="1">
    <citation type="journal article" date="2001" name="Mol. Biol. Evol.">
        <title>Mechanisms for evolving hypervariability: the case of conopeptides.</title>
        <authorList>
            <person name="Conticello S.G."/>
            <person name="Gilad Y."/>
            <person name="Avidan N."/>
            <person name="Ben-Asher E."/>
            <person name="Levy Z."/>
            <person name="Fainzilber M."/>
        </authorList>
    </citation>
    <scope>NUCLEOTIDE SEQUENCE [MRNA]</scope>
    <source>
        <tissue>Venom duct</tissue>
    </source>
</reference>
<keyword id="KW-1015">Disulfide bond</keyword>
<keyword id="KW-0528">Neurotoxin</keyword>
<keyword id="KW-0964">Secreted</keyword>
<keyword id="KW-0732">Signal</keyword>
<keyword id="KW-0800">Toxin</keyword>
<dbReference type="EMBL" id="AF214988">
    <property type="protein sequence ID" value="AAG60416.1"/>
    <property type="molecule type" value="mRNA"/>
</dbReference>
<dbReference type="ConoServer" id="675">
    <property type="toxin name" value="Ts5.3 precursor"/>
</dbReference>
<dbReference type="GO" id="GO:0005576">
    <property type="term" value="C:extracellular region"/>
    <property type="evidence" value="ECO:0007669"/>
    <property type="project" value="UniProtKB-SubCell"/>
</dbReference>
<dbReference type="GO" id="GO:0008200">
    <property type="term" value="F:ion channel inhibitor activity"/>
    <property type="evidence" value="ECO:0007669"/>
    <property type="project" value="InterPro"/>
</dbReference>
<dbReference type="GO" id="GO:0090729">
    <property type="term" value="F:toxin activity"/>
    <property type="evidence" value="ECO:0007669"/>
    <property type="project" value="UniProtKB-KW"/>
</dbReference>
<dbReference type="InterPro" id="IPR004214">
    <property type="entry name" value="Conotoxin"/>
</dbReference>
<dbReference type="Pfam" id="PF02950">
    <property type="entry name" value="Conotoxin"/>
    <property type="match status" value="1"/>
</dbReference>
<evidence type="ECO:0000250" key="1"/>
<evidence type="ECO:0000255" key="2"/>
<evidence type="ECO:0000305" key="3"/>
<evidence type="ECO:0000305" key="4">
    <source>
    </source>
</evidence>
<evidence type="ECO:0000312" key="5">
    <source>
        <dbReference type="EMBL" id="AAG60416.1"/>
    </source>
</evidence>
<accession>Q9BPE3</accession>
<name>CT53_CONTS</name>